<evidence type="ECO:0000255" key="1">
    <source>
        <dbReference type="HAMAP-Rule" id="MF_00202"/>
    </source>
</evidence>
<comment type="function">
    <text evidence="1">Catalyzes the 1,3-allylic rearrangement of the homoallylic substrate isopentenyl (IPP) to its highly electrophilic allylic isomer, dimethylallyl diphosphate (DMAPP).</text>
</comment>
<comment type="catalytic activity">
    <reaction evidence="1">
        <text>isopentenyl diphosphate = dimethylallyl diphosphate</text>
        <dbReference type="Rhea" id="RHEA:23284"/>
        <dbReference type="ChEBI" id="CHEBI:57623"/>
        <dbReference type="ChEBI" id="CHEBI:128769"/>
        <dbReference type="EC" id="5.3.3.2"/>
    </reaction>
</comment>
<comment type="cofactor">
    <cofactor evidence="1">
        <name>Mg(2+)</name>
        <dbReference type="ChEBI" id="CHEBI:18420"/>
    </cofactor>
    <text evidence="1">Binds 1 Mg(2+) ion per subunit. The magnesium ion binds only when substrate is bound.</text>
</comment>
<comment type="cofactor">
    <cofactor evidence="1">
        <name>Mn(2+)</name>
        <dbReference type="ChEBI" id="CHEBI:29035"/>
    </cofactor>
    <text evidence="1">Binds 1 Mn(2+) ion per subunit.</text>
</comment>
<comment type="pathway">
    <text evidence="1">Isoprenoid biosynthesis; dimethylallyl diphosphate biosynthesis; dimethylallyl diphosphate from isopentenyl diphosphate: step 1/1.</text>
</comment>
<comment type="subunit">
    <text evidence="1">Homodimer.</text>
</comment>
<comment type="subcellular location">
    <subcellularLocation>
        <location evidence="1">Cytoplasm</location>
    </subcellularLocation>
</comment>
<comment type="similarity">
    <text evidence="1">Belongs to the IPP isomerase type 1 family.</text>
</comment>
<accession>Q3YXY0</accession>
<sequence>MQTEHVILLNAQGVPTGTLEKYAAHTADTRLHLAFSSWLFNAKGQLLVTRRALSKKAWPGVWTNSVCGHPQLGESNEDAVIRRCRYELGVEITPPESIYPDFRYRATDPNGIVENEVCPVFAARTTSALQINDDEVMDYQWCDLADVLHGIDATPWAFSPWMVMQAANSEARKLLSAFAQHN</sequence>
<keyword id="KW-0963">Cytoplasm</keyword>
<keyword id="KW-0413">Isomerase</keyword>
<keyword id="KW-0414">Isoprene biosynthesis</keyword>
<keyword id="KW-0460">Magnesium</keyword>
<keyword id="KW-0464">Manganese</keyword>
<keyword id="KW-0479">Metal-binding</keyword>
<keyword id="KW-1185">Reference proteome</keyword>
<name>IDI_SHISS</name>
<reference key="1">
    <citation type="journal article" date="2005" name="Nucleic Acids Res.">
        <title>Genome dynamics and diversity of Shigella species, the etiologic agents of bacillary dysentery.</title>
        <authorList>
            <person name="Yang F."/>
            <person name="Yang J."/>
            <person name="Zhang X."/>
            <person name="Chen L."/>
            <person name="Jiang Y."/>
            <person name="Yan Y."/>
            <person name="Tang X."/>
            <person name="Wang J."/>
            <person name="Xiong Z."/>
            <person name="Dong J."/>
            <person name="Xue Y."/>
            <person name="Zhu Y."/>
            <person name="Xu X."/>
            <person name="Sun L."/>
            <person name="Chen S."/>
            <person name="Nie H."/>
            <person name="Peng J."/>
            <person name="Xu J."/>
            <person name="Wang Y."/>
            <person name="Yuan Z."/>
            <person name="Wen Y."/>
            <person name="Yao Z."/>
            <person name="Shen Y."/>
            <person name="Qiang B."/>
            <person name="Hou Y."/>
            <person name="Yu J."/>
            <person name="Jin Q."/>
        </authorList>
    </citation>
    <scope>NUCLEOTIDE SEQUENCE [LARGE SCALE GENOMIC DNA]</scope>
    <source>
        <strain>Ss046</strain>
    </source>
</reference>
<dbReference type="EC" id="5.3.3.2" evidence="1"/>
<dbReference type="EMBL" id="CP000038">
    <property type="protein sequence ID" value="AAZ89632.1"/>
    <property type="molecule type" value="Genomic_DNA"/>
</dbReference>
<dbReference type="RefSeq" id="WP_001192814.1">
    <property type="nucleotide sequence ID" value="NC_007384.1"/>
</dbReference>
<dbReference type="SMR" id="Q3YXY0"/>
<dbReference type="GeneID" id="93779113"/>
<dbReference type="KEGG" id="ssn:SSON_3042"/>
<dbReference type="HOGENOM" id="CLU_060552_2_0_6"/>
<dbReference type="UniPathway" id="UPA00059">
    <property type="reaction ID" value="UER00104"/>
</dbReference>
<dbReference type="Proteomes" id="UP000002529">
    <property type="component" value="Chromosome"/>
</dbReference>
<dbReference type="GO" id="GO:0005737">
    <property type="term" value="C:cytoplasm"/>
    <property type="evidence" value="ECO:0007669"/>
    <property type="project" value="UniProtKB-SubCell"/>
</dbReference>
<dbReference type="GO" id="GO:0004452">
    <property type="term" value="F:isopentenyl-diphosphate delta-isomerase activity"/>
    <property type="evidence" value="ECO:0007669"/>
    <property type="project" value="UniProtKB-UniRule"/>
</dbReference>
<dbReference type="GO" id="GO:0046872">
    <property type="term" value="F:metal ion binding"/>
    <property type="evidence" value="ECO:0007669"/>
    <property type="project" value="UniProtKB-KW"/>
</dbReference>
<dbReference type="GO" id="GO:0050992">
    <property type="term" value="P:dimethylallyl diphosphate biosynthetic process"/>
    <property type="evidence" value="ECO:0007669"/>
    <property type="project" value="UniProtKB-UniRule"/>
</dbReference>
<dbReference type="GO" id="GO:0008299">
    <property type="term" value="P:isoprenoid biosynthetic process"/>
    <property type="evidence" value="ECO:0007669"/>
    <property type="project" value="UniProtKB-KW"/>
</dbReference>
<dbReference type="CDD" id="cd02885">
    <property type="entry name" value="NUDIX_IPP_Isomerase"/>
    <property type="match status" value="1"/>
</dbReference>
<dbReference type="FunFam" id="3.90.79.10:FF:000009">
    <property type="entry name" value="Isopentenyl-diphosphate Delta-isomerase"/>
    <property type="match status" value="1"/>
</dbReference>
<dbReference type="Gene3D" id="3.90.79.10">
    <property type="entry name" value="Nucleoside Triphosphate Pyrophosphohydrolase"/>
    <property type="match status" value="1"/>
</dbReference>
<dbReference type="HAMAP" id="MF_00202">
    <property type="entry name" value="Idi"/>
    <property type="match status" value="1"/>
</dbReference>
<dbReference type="InterPro" id="IPR056375">
    <property type="entry name" value="Idi_bact"/>
</dbReference>
<dbReference type="InterPro" id="IPR011876">
    <property type="entry name" value="IsopentenylPP_isomerase_typ1"/>
</dbReference>
<dbReference type="InterPro" id="IPR015797">
    <property type="entry name" value="NUDIX_hydrolase-like_dom_sf"/>
</dbReference>
<dbReference type="InterPro" id="IPR000086">
    <property type="entry name" value="NUDIX_hydrolase_dom"/>
</dbReference>
<dbReference type="NCBIfam" id="TIGR02150">
    <property type="entry name" value="IPP_isom_1"/>
    <property type="match status" value="1"/>
</dbReference>
<dbReference type="NCBIfam" id="NF002995">
    <property type="entry name" value="PRK03759.1"/>
    <property type="match status" value="1"/>
</dbReference>
<dbReference type="PANTHER" id="PTHR10885">
    <property type="entry name" value="ISOPENTENYL-DIPHOSPHATE DELTA-ISOMERASE"/>
    <property type="match status" value="1"/>
</dbReference>
<dbReference type="PANTHER" id="PTHR10885:SF0">
    <property type="entry name" value="ISOPENTENYL-DIPHOSPHATE DELTA-ISOMERASE"/>
    <property type="match status" value="1"/>
</dbReference>
<dbReference type="Pfam" id="PF00293">
    <property type="entry name" value="NUDIX"/>
    <property type="match status" value="1"/>
</dbReference>
<dbReference type="PIRSF" id="PIRSF018427">
    <property type="entry name" value="Isopntndiph_ism"/>
    <property type="match status" value="1"/>
</dbReference>
<dbReference type="SUPFAM" id="SSF55811">
    <property type="entry name" value="Nudix"/>
    <property type="match status" value="1"/>
</dbReference>
<dbReference type="PROSITE" id="PS51462">
    <property type="entry name" value="NUDIX"/>
    <property type="match status" value="1"/>
</dbReference>
<proteinExistence type="inferred from homology"/>
<feature type="chain" id="PRO_0000227129" description="Isopentenyl-diphosphate Delta-isomerase">
    <location>
        <begin position="1"/>
        <end position="182"/>
    </location>
</feature>
<feature type="domain" description="Nudix hydrolase">
    <location>
        <begin position="30"/>
        <end position="164"/>
    </location>
</feature>
<feature type="active site" evidence="1">
    <location>
        <position position="67"/>
    </location>
</feature>
<feature type="active site" evidence="1">
    <location>
        <position position="116"/>
    </location>
</feature>
<feature type="binding site" evidence="1">
    <location>
        <position position="25"/>
    </location>
    <ligand>
        <name>Mn(2+)</name>
        <dbReference type="ChEBI" id="CHEBI:29035"/>
    </ligand>
</feature>
<feature type="binding site" evidence="1">
    <location>
        <position position="32"/>
    </location>
    <ligand>
        <name>Mn(2+)</name>
        <dbReference type="ChEBI" id="CHEBI:29035"/>
    </ligand>
</feature>
<feature type="binding site" evidence="1">
    <location>
        <position position="67"/>
    </location>
    <ligand>
        <name>Mg(2+)</name>
        <dbReference type="ChEBI" id="CHEBI:18420"/>
    </ligand>
</feature>
<feature type="binding site" evidence="1">
    <location>
        <position position="69"/>
    </location>
    <ligand>
        <name>Mn(2+)</name>
        <dbReference type="ChEBI" id="CHEBI:29035"/>
    </ligand>
</feature>
<feature type="binding site" evidence="1">
    <location>
        <position position="87"/>
    </location>
    <ligand>
        <name>Mg(2+)</name>
        <dbReference type="ChEBI" id="CHEBI:18420"/>
    </ligand>
</feature>
<feature type="binding site" evidence="1">
    <location>
        <position position="114"/>
    </location>
    <ligand>
        <name>Mn(2+)</name>
        <dbReference type="ChEBI" id="CHEBI:29035"/>
    </ligand>
</feature>
<feature type="binding site" evidence="1">
    <location>
        <position position="116"/>
    </location>
    <ligand>
        <name>Mn(2+)</name>
        <dbReference type="ChEBI" id="CHEBI:29035"/>
    </ligand>
</feature>
<protein>
    <recommendedName>
        <fullName evidence="1">Isopentenyl-diphosphate Delta-isomerase</fullName>
        <shortName evidence="1">IPP isomerase</shortName>
        <ecNumber evidence="1">5.3.3.2</ecNumber>
    </recommendedName>
    <alternativeName>
        <fullName evidence="1">IPP:DMAPP isomerase</fullName>
    </alternativeName>
    <alternativeName>
        <fullName evidence="1">Isopentenyl pyrophosphate isomerase</fullName>
    </alternativeName>
</protein>
<gene>
    <name evidence="1" type="primary">idi</name>
    <name type="ordered locus">SSON_3042</name>
</gene>
<organism>
    <name type="scientific">Shigella sonnei (strain Ss046)</name>
    <dbReference type="NCBI Taxonomy" id="300269"/>
    <lineage>
        <taxon>Bacteria</taxon>
        <taxon>Pseudomonadati</taxon>
        <taxon>Pseudomonadota</taxon>
        <taxon>Gammaproteobacteria</taxon>
        <taxon>Enterobacterales</taxon>
        <taxon>Enterobacteriaceae</taxon>
        <taxon>Shigella</taxon>
    </lineage>
</organism>